<evidence type="ECO:0000250" key="1"/>
<evidence type="ECO:0000255" key="2"/>
<evidence type="ECO:0000255" key="3">
    <source>
        <dbReference type="PROSITE-ProRule" id="PRU00625"/>
    </source>
</evidence>
<evidence type="ECO:0000256" key="4">
    <source>
        <dbReference type="SAM" id="MobiDB-lite"/>
    </source>
</evidence>
<evidence type="ECO:0000305" key="5"/>
<feature type="chain" id="PRO_0000197103" description="Pre-mRNA-splicing factor cef-1">
    <location>
        <begin position="1"/>
        <end position="779"/>
    </location>
</feature>
<feature type="domain" description="HTH myb-type 1" evidence="3">
    <location>
        <begin position="1"/>
        <end position="56"/>
    </location>
</feature>
<feature type="domain" description="HTH myb-type 2" evidence="3">
    <location>
        <begin position="57"/>
        <end position="106"/>
    </location>
</feature>
<feature type="DNA-binding region" description="H-T-H motif" evidence="3">
    <location>
        <begin position="29"/>
        <end position="52"/>
    </location>
</feature>
<feature type="DNA-binding region" description="H-T-H motif" evidence="3">
    <location>
        <begin position="80"/>
        <end position="102"/>
    </location>
</feature>
<feature type="region of interest" description="Disordered" evidence="4">
    <location>
        <begin position="113"/>
        <end position="192"/>
    </location>
</feature>
<feature type="region of interest" description="Disordered" evidence="4">
    <location>
        <begin position="246"/>
        <end position="284"/>
    </location>
</feature>
<feature type="region of interest" description="Disordered" evidence="4">
    <location>
        <begin position="424"/>
        <end position="448"/>
    </location>
</feature>
<feature type="region of interest" description="Disordered" evidence="4">
    <location>
        <begin position="497"/>
        <end position="525"/>
    </location>
</feature>
<feature type="coiled-coil region" evidence="2">
    <location>
        <begin position="157"/>
        <end position="204"/>
    </location>
</feature>
<feature type="coiled-coil region" evidence="2">
    <location>
        <begin position="653"/>
        <end position="772"/>
    </location>
</feature>
<feature type="compositionally biased region" description="Basic and acidic residues" evidence="4">
    <location>
        <begin position="127"/>
        <end position="152"/>
    </location>
</feature>
<feature type="compositionally biased region" description="Basic and acidic residues" evidence="4">
    <location>
        <begin position="246"/>
        <end position="256"/>
    </location>
</feature>
<feature type="compositionally biased region" description="Basic and acidic residues" evidence="4">
    <location>
        <begin position="263"/>
        <end position="281"/>
    </location>
</feature>
<dbReference type="EMBL" id="CM002239">
    <property type="protein sequence ID" value="EAA33398.1"/>
    <property type="molecule type" value="Genomic_DNA"/>
</dbReference>
<dbReference type="RefSeq" id="XP_962634.1">
    <property type="nucleotide sequence ID" value="XM_957541.2"/>
</dbReference>
<dbReference type="SMR" id="Q7SAF6"/>
<dbReference type="STRING" id="367110.Q7SAF6"/>
<dbReference type="PaxDb" id="5141-EFNCRP00000007041"/>
<dbReference type="EnsemblFungi" id="EAA33398">
    <property type="protein sequence ID" value="EAA33398"/>
    <property type="gene ID" value="NCU06994"/>
</dbReference>
<dbReference type="GeneID" id="3878772"/>
<dbReference type="KEGG" id="ncr:NCU06994"/>
<dbReference type="VEuPathDB" id="FungiDB:NCU06994"/>
<dbReference type="HOGENOM" id="CLU_009082_0_0_1"/>
<dbReference type="InParanoid" id="Q7SAF6"/>
<dbReference type="OMA" id="KMGMAGE"/>
<dbReference type="OrthoDB" id="1410009at2759"/>
<dbReference type="Proteomes" id="UP000001805">
    <property type="component" value="Chromosome 4, Linkage Group IV"/>
</dbReference>
<dbReference type="GO" id="GO:0005829">
    <property type="term" value="C:cytosol"/>
    <property type="evidence" value="ECO:0007669"/>
    <property type="project" value="EnsemblFungi"/>
</dbReference>
<dbReference type="GO" id="GO:0140602">
    <property type="term" value="C:nucleolar peripheral inclusion body"/>
    <property type="evidence" value="ECO:0007669"/>
    <property type="project" value="EnsemblFungi"/>
</dbReference>
<dbReference type="GO" id="GO:0071014">
    <property type="term" value="C:post-mRNA release spliceosomal complex"/>
    <property type="evidence" value="ECO:0007669"/>
    <property type="project" value="EnsemblFungi"/>
</dbReference>
<dbReference type="GO" id="GO:0000974">
    <property type="term" value="C:Prp19 complex"/>
    <property type="evidence" value="ECO:0000318"/>
    <property type="project" value="GO_Central"/>
</dbReference>
<dbReference type="GO" id="GO:0005681">
    <property type="term" value="C:spliceosomal complex"/>
    <property type="evidence" value="ECO:0000318"/>
    <property type="project" value="GO_Central"/>
</dbReference>
<dbReference type="GO" id="GO:0003677">
    <property type="term" value="F:DNA binding"/>
    <property type="evidence" value="ECO:0007669"/>
    <property type="project" value="UniProtKB-KW"/>
</dbReference>
<dbReference type="GO" id="GO:0045292">
    <property type="term" value="P:mRNA cis splicing, via spliceosome"/>
    <property type="evidence" value="ECO:0007669"/>
    <property type="project" value="EnsemblFungi"/>
</dbReference>
<dbReference type="GO" id="GO:0000398">
    <property type="term" value="P:mRNA splicing, via spliceosome"/>
    <property type="evidence" value="ECO:0000318"/>
    <property type="project" value="GO_Central"/>
</dbReference>
<dbReference type="CDD" id="cd00167">
    <property type="entry name" value="SANT"/>
    <property type="match status" value="1"/>
</dbReference>
<dbReference type="CDD" id="cd11659">
    <property type="entry name" value="SANT_CDC5_II"/>
    <property type="match status" value="1"/>
</dbReference>
<dbReference type="FunFam" id="1.10.10.60:FF:000021">
    <property type="entry name" value="CDC5 cell division cycle 5-like"/>
    <property type="match status" value="1"/>
</dbReference>
<dbReference type="Gene3D" id="1.10.10.60">
    <property type="entry name" value="Homeodomain-like"/>
    <property type="match status" value="2"/>
</dbReference>
<dbReference type="InterPro" id="IPR047242">
    <property type="entry name" value="CDC5L/Cef1"/>
</dbReference>
<dbReference type="InterPro" id="IPR021786">
    <property type="entry name" value="Cdc5p/Cef1_C"/>
</dbReference>
<dbReference type="InterPro" id="IPR009057">
    <property type="entry name" value="Homeodomain-like_sf"/>
</dbReference>
<dbReference type="InterPro" id="IPR017930">
    <property type="entry name" value="Myb_dom"/>
</dbReference>
<dbReference type="InterPro" id="IPR001005">
    <property type="entry name" value="SANT/Myb"/>
</dbReference>
<dbReference type="InterPro" id="IPR047240">
    <property type="entry name" value="SANT_CDC5L_II"/>
</dbReference>
<dbReference type="PANTHER" id="PTHR45885">
    <property type="entry name" value="CELL DIVISION CYCLE 5-LIKE PROTEIN"/>
    <property type="match status" value="1"/>
</dbReference>
<dbReference type="PANTHER" id="PTHR45885:SF1">
    <property type="entry name" value="CELL DIVISION CYCLE 5-LIKE PROTEIN"/>
    <property type="match status" value="1"/>
</dbReference>
<dbReference type="Pfam" id="PF11831">
    <property type="entry name" value="Myb_Cef"/>
    <property type="match status" value="1"/>
</dbReference>
<dbReference type="Pfam" id="PF13921">
    <property type="entry name" value="Myb_DNA-bind_6"/>
    <property type="match status" value="1"/>
</dbReference>
<dbReference type="SMART" id="SM00717">
    <property type="entry name" value="SANT"/>
    <property type="match status" value="2"/>
</dbReference>
<dbReference type="SUPFAM" id="SSF46689">
    <property type="entry name" value="Homeodomain-like"/>
    <property type="match status" value="1"/>
</dbReference>
<dbReference type="PROSITE" id="PS51294">
    <property type="entry name" value="HTH_MYB"/>
    <property type="match status" value="2"/>
</dbReference>
<proteinExistence type="inferred from homology"/>
<comment type="function">
    <text evidence="1">Involved in pre-mRNA splicing and cell cycle control.</text>
</comment>
<comment type="subunit">
    <text evidence="1">Associated with the spliceosome.</text>
</comment>
<comment type="subcellular location">
    <subcellularLocation>
        <location evidence="1">Cytoplasm</location>
    </subcellularLocation>
    <subcellularLocation>
        <location evidence="3">Nucleus</location>
    </subcellularLocation>
</comment>
<comment type="similarity">
    <text evidence="5">Belongs to the CEF1 family.</text>
</comment>
<sequence>MPVVKGGVWTNIEDEILKASVSKYGLNQWARVSSLLARKTPKQCKARWNEWLDPSIKKIEWSKEEDEKLLHLAKLMPTQWRTIAPIVGRTANQCLERYQRLLDEAEQREASALGLTGPDGGEAHAPSADDVRKLRPGEVDPDPETKPARPDTIDLDEDEKEMLSEARARLANTQGKKAKRKARERQQEESRRLAALQKRRELKTAGINIKVTTKKQGQMDYNADIPFEKKPVPGFYDTTEEMSRNEYQRAHFDPKKQQVGNKRKGEEDERDGKRRKGDKDPSVQAALKAGQLQKMREAEQSSKRRALVLPAPQVGEGELEEIVKMGMIGERANMLARESDNDATRGLINNYSTLNTNAPIRTPMAPAQEDHIANEIRNIRALTETQSSLLGGENTPLHQGVGSTGFESVAPRKQVMSTPNPLATPLRAAGAGPGATPLRVGQTPLRTPRDTFALNDAGDEMSMVGGTPRDVKMREMSIRHQLKQGLASLPKPKETEWELELPDDQQEPKTAEQLEEDAAERDRREREIREARELLERKRRTQVMQRDLPRPVQVDYQSLLKEASQAEDPVKVLIAREAALLVAHDATKYPLPGAQPTGRALEIQKIDDAALQEAKLQVLMEIKDKPKPEEVQAVWEKSNSSSLLLGLGCYEDDEEEEQISTMQIALEEVIDQIVASAEKGNKLEKKLNLHLGGYKNRAEMLRKKISEAHEALEKANNALGAFKVLQSSEQAAIRNRLAALREEVGFVSTREREAQELYRRTREELDALTLNGPKANGFR</sequence>
<reference key="1">
    <citation type="journal article" date="2003" name="Nature">
        <title>The genome sequence of the filamentous fungus Neurospora crassa.</title>
        <authorList>
            <person name="Galagan J.E."/>
            <person name="Calvo S.E."/>
            <person name="Borkovich K.A."/>
            <person name="Selker E.U."/>
            <person name="Read N.D."/>
            <person name="Jaffe D.B."/>
            <person name="FitzHugh W."/>
            <person name="Ma L.-J."/>
            <person name="Smirnov S."/>
            <person name="Purcell S."/>
            <person name="Rehman B."/>
            <person name="Elkins T."/>
            <person name="Engels R."/>
            <person name="Wang S."/>
            <person name="Nielsen C.B."/>
            <person name="Butler J."/>
            <person name="Endrizzi M."/>
            <person name="Qui D."/>
            <person name="Ianakiev P."/>
            <person name="Bell-Pedersen D."/>
            <person name="Nelson M.A."/>
            <person name="Werner-Washburne M."/>
            <person name="Selitrennikoff C.P."/>
            <person name="Kinsey J.A."/>
            <person name="Braun E.L."/>
            <person name="Zelter A."/>
            <person name="Schulte U."/>
            <person name="Kothe G.O."/>
            <person name="Jedd G."/>
            <person name="Mewes H.-W."/>
            <person name="Staben C."/>
            <person name="Marcotte E."/>
            <person name="Greenberg D."/>
            <person name="Roy A."/>
            <person name="Foley K."/>
            <person name="Naylor J."/>
            <person name="Stange-Thomann N."/>
            <person name="Barrett R."/>
            <person name="Gnerre S."/>
            <person name="Kamal M."/>
            <person name="Kamvysselis M."/>
            <person name="Mauceli E.W."/>
            <person name="Bielke C."/>
            <person name="Rudd S."/>
            <person name="Frishman D."/>
            <person name="Krystofova S."/>
            <person name="Rasmussen C."/>
            <person name="Metzenberg R.L."/>
            <person name="Perkins D.D."/>
            <person name="Kroken S."/>
            <person name="Cogoni C."/>
            <person name="Macino G."/>
            <person name="Catcheside D.E.A."/>
            <person name="Li W."/>
            <person name="Pratt R.J."/>
            <person name="Osmani S.A."/>
            <person name="DeSouza C.P.C."/>
            <person name="Glass N.L."/>
            <person name="Orbach M.J."/>
            <person name="Berglund J.A."/>
            <person name="Voelker R."/>
            <person name="Yarden O."/>
            <person name="Plamann M."/>
            <person name="Seiler S."/>
            <person name="Dunlap J.C."/>
            <person name="Radford A."/>
            <person name="Aramayo R."/>
            <person name="Natvig D.O."/>
            <person name="Alex L.A."/>
            <person name="Mannhaupt G."/>
            <person name="Ebbole D.J."/>
            <person name="Freitag M."/>
            <person name="Paulsen I."/>
            <person name="Sachs M.S."/>
            <person name="Lander E.S."/>
            <person name="Nusbaum C."/>
            <person name="Birren B.W."/>
        </authorList>
    </citation>
    <scope>NUCLEOTIDE SEQUENCE [LARGE SCALE GENOMIC DNA]</scope>
    <source>
        <strain>ATCC 24698 / 74-OR23-1A / CBS 708.71 / DSM 1257 / FGSC 987</strain>
    </source>
</reference>
<gene>
    <name type="primary">cef-1</name>
    <name type="ORF">NCU06994</name>
</gene>
<protein>
    <recommendedName>
        <fullName>Pre-mRNA-splicing factor cef-1</fullName>
    </recommendedName>
</protein>
<name>CEF1_NEUCR</name>
<accession>Q7SAF6</accession>
<keyword id="KW-0175">Coiled coil</keyword>
<keyword id="KW-0963">Cytoplasm</keyword>
<keyword id="KW-0238">DNA-binding</keyword>
<keyword id="KW-0507">mRNA processing</keyword>
<keyword id="KW-0508">mRNA splicing</keyword>
<keyword id="KW-0539">Nucleus</keyword>
<keyword id="KW-1185">Reference proteome</keyword>
<keyword id="KW-0677">Repeat</keyword>
<keyword id="KW-0747">Spliceosome</keyword>
<organism>
    <name type="scientific">Neurospora crassa (strain ATCC 24698 / 74-OR23-1A / CBS 708.71 / DSM 1257 / FGSC 987)</name>
    <dbReference type="NCBI Taxonomy" id="367110"/>
    <lineage>
        <taxon>Eukaryota</taxon>
        <taxon>Fungi</taxon>
        <taxon>Dikarya</taxon>
        <taxon>Ascomycota</taxon>
        <taxon>Pezizomycotina</taxon>
        <taxon>Sordariomycetes</taxon>
        <taxon>Sordariomycetidae</taxon>
        <taxon>Sordariales</taxon>
        <taxon>Sordariaceae</taxon>
        <taxon>Neurospora</taxon>
    </lineage>
</organism>